<gene>
    <name evidence="1" type="primary">rplK</name>
    <name type="ordered locus">MS53_0624</name>
</gene>
<keyword id="KW-0488">Methylation</keyword>
<keyword id="KW-1185">Reference proteome</keyword>
<keyword id="KW-0687">Ribonucleoprotein</keyword>
<keyword id="KW-0689">Ribosomal protein</keyword>
<keyword id="KW-0694">RNA-binding</keyword>
<keyword id="KW-0699">rRNA-binding</keyword>
<name>RL11_MYCS5</name>
<reference key="1">
    <citation type="journal article" date="2005" name="J. Bacteriol.">
        <title>Swine and poultry pathogens: the complete genome sequences of two strains of Mycoplasma hyopneumoniae and a strain of Mycoplasma synoviae.</title>
        <authorList>
            <person name="Vasconcelos A.T.R."/>
            <person name="Ferreira H.B."/>
            <person name="Bizarro C.V."/>
            <person name="Bonatto S.L."/>
            <person name="Carvalho M.O."/>
            <person name="Pinto P.M."/>
            <person name="Almeida D.F."/>
            <person name="Almeida L.G.P."/>
            <person name="Almeida R."/>
            <person name="Alves-Junior L."/>
            <person name="Assuncao E.N."/>
            <person name="Azevedo V.A.C."/>
            <person name="Bogo M.R."/>
            <person name="Brigido M.M."/>
            <person name="Brocchi M."/>
            <person name="Burity H.A."/>
            <person name="Camargo A.A."/>
            <person name="Camargo S.S."/>
            <person name="Carepo M.S."/>
            <person name="Carraro D.M."/>
            <person name="de Mattos Cascardo J.C."/>
            <person name="Castro L.A."/>
            <person name="Cavalcanti G."/>
            <person name="Chemale G."/>
            <person name="Collevatti R.G."/>
            <person name="Cunha C.W."/>
            <person name="Dallagiovanna B."/>
            <person name="Dambros B.P."/>
            <person name="Dellagostin O.A."/>
            <person name="Falcao C."/>
            <person name="Fantinatti-Garboggini F."/>
            <person name="Felipe M.S.S."/>
            <person name="Fiorentin L."/>
            <person name="Franco G.R."/>
            <person name="Freitas N.S.A."/>
            <person name="Frias D."/>
            <person name="Grangeiro T.B."/>
            <person name="Grisard E.C."/>
            <person name="Guimaraes C.T."/>
            <person name="Hungria M."/>
            <person name="Jardim S.N."/>
            <person name="Krieger M.A."/>
            <person name="Laurino J.P."/>
            <person name="Lima L.F.A."/>
            <person name="Lopes M.I."/>
            <person name="Loreto E.L.S."/>
            <person name="Madeira H.M.F."/>
            <person name="Manfio G.P."/>
            <person name="Maranhao A.Q."/>
            <person name="Martinkovics C.T."/>
            <person name="Medeiros S.R.B."/>
            <person name="Moreira M.A.M."/>
            <person name="Neiva M."/>
            <person name="Ramalho-Neto C.E."/>
            <person name="Nicolas M.F."/>
            <person name="Oliveira S.C."/>
            <person name="Paixao R.F.C."/>
            <person name="Pedrosa F.O."/>
            <person name="Pena S.D.J."/>
            <person name="Pereira M."/>
            <person name="Pereira-Ferrari L."/>
            <person name="Piffer I."/>
            <person name="Pinto L.S."/>
            <person name="Potrich D.P."/>
            <person name="Salim A.C.M."/>
            <person name="Santos F.R."/>
            <person name="Schmitt R."/>
            <person name="Schneider M.P.C."/>
            <person name="Schrank A."/>
            <person name="Schrank I.S."/>
            <person name="Schuck A.F."/>
            <person name="Seuanez H.N."/>
            <person name="Silva D.W."/>
            <person name="Silva R."/>
            <person name="Silva S.C."/>
            <person name="Soares C.M.A."/>
            <person name="Souza K.R.L."/>
            <person name="Souza R.C."/>
            <person name="Staats C.C."/>
            <person name="Steffens M.B.R."/>
            <person name="Teixeira S.M.R."/>
            <person name="Urmenyi T.P."/>
            <person name="Vainstein M.H."/>
            <person name="Zuccherato L.W."/>
            <person name="Simpson A.J.G."/>
            <person name="Zaha A."/>
        </authorList>
    </citation>
    <scope>NUCLEOTIDE SEQUENCE [LARGE SCALE GENOMIC DNA]</scope>
    <source>
        <strain>53</strain>
    </source>
</reference>
<comment type="function">
    <text evidence="1">Forms part of the ribosomal stalk which helps the ribosome interact with GTP-bound translation factors.</text>
</comment>
<comment type="subunit">
    <text evidence="1">Part of the ribosomal stalk of the 50S ribosomal subunit. Interacts with L10 and the large rRNA to form the base of the stalk. L10 forms an elongated spine to which L12 dimers bind in a sequential fashion forming a multimeric L10(L12)X complex.</text>
</comment>
<comment type="PTM">
    <text evidence="1">One or more lysine residues are methylated.</text>
</comment>
<comment type="similarity">
    <text evidence="1">Belongs to the universal ribosomal protein uL11 family.</text>
</comment>
<proteinExistence type="inferred from homology"/>
<sequence>MAKDVQKVAKLQFLAGKAKPGPSLAGVGVNMPEFTKAFNDATRDRGDEPVPVQITVFKDKTFEFKLFTAPASYKIKQAAKIQSGSKNAKTTIAGTITLEQLKEIAEYKLPDLNTDDVNAAMAIVAGTAKQMGVLVEGYDDVAKAKQAAIEAAKAESLAKAKKESLKSQEEELKASKGKAIDVNVIEKEREEKE</sequence>
<dbReference type="EMBL" id="AE017245">
    <property type="protein sequence ID" value="AAZ44031.1"/>
    <property type="molecule type" value="Genomic_DNA"/>
</dbReference>
<dbReference type="RefSeq" id="WP_011283760.1">
    <property type="nucleotide sequence ID" value="NC_007294.1"/>
</dbReference>
<dbReference type="SMR" id="Q4A5E0"/>
<dbReference type="STRING" id="262723.MS53_0624"/>
<dbReference type="KEGG" id="msy:MS53_0624"/>
<dbReference type="eggNOG" id="COG0080">
    <property type="taxonomic scope" value="Bacteria"/>
</dbReference>
<dbReference type="HOGENOM" id="CLU_074237_2_2_14"/>
<dbReference type="OrthoDB" id="9802408at2"/>
<dbReference type="Proteomes" id="UP000000549">
    <property type="component" value="Chromosome"/>
</dbReference>
<dbReference type="GO" id="GO:0022625">
    <property type="term" value="C:cytosolic large ribosomal subunit"/>
    <property type="evidence" value="ECO:0007669"/>
    <property type="project" value="TreeGrafter"/>
</dbReference>
<dbReference type="GO" id="GO:0070180">
    <property type="term" value="F:large ribosomal subunit rRNA binding"/>
    <property type="evidence" value="ECO:0007669"/>
    <property type="project" value="UniProtKB-UniRule"/>
</dbReference>
<dbReference type="GO" id="GO:0003735">
    <property type="term" value="F:structural constituent of ribosome"/>
    <property type="evidence" value="ECO:0007669"/>
    <property type="project" value="InterPro"/>
</dbReference>
<dbReference type="GO" id="GO:0006412">
    <property type="term" value="P:translation"/>
    <property type="evidence" value="ECO:0007669"/>
    <property type="project" value="UniProtKB-UniRule"/>
</dbReference>
<dbReference type="CDD" id="cd00349">
    <property type="entry name" value="Ribosomal_L11"/>
    <property type="match status" value="1"/>
</dbReference>
<dbReference type="Gene3D" id="1.10.10.250">
    <property type="entry name" value="Ribosomal protein L11, C-terminal domain"/>
    <property type="match status" value="1"/>
</dbReference>
<dbReference type="Gene3D" id="3.30.1550.10">
    <property type="entry name" value="Ribosomal protein L11/L12, N-terminal domain"/>
    <property type="match status" value="1"/>
</dbReference>
<dbReference type="HAMAP" id="MF_00736">
    <property type="entry name" value="Ribosomal_uL11"/>
    <property type="match status" value="1"/>
</dbReference>
<dbReference type="InterPro" id="IPR000911">
    <property type="entry name" value="Ribosomal_uL11"/>
</dbReference>
<dbReference type="InterPro" id="IPR006519">
    <property type="entry name" value="Ribosomal_uL11_bac-typ"/>
</dbReference>
<dbReference type="InterPro" id="IPR020783">
    <property type="entry name" value="Ribosomal_uL11_C"/>
</dbReference>
<dbReference type="InterPro" id="IPR036769">
    <property type="entry name" value="Ribosomal_uL11_C_sf"/>
</dbReference>
<dbReference type="InterPro" id="IPR020784">
    <property type="entry name" value="Ribosomal_uL11_N"/>
</dbReference>
<dbReference type="InterPro" id="IPR036796">
    <property type="entry name" value="Ribosomal_uL11_N_sf"/>
</dbReference>
<dbReference type="NCBIfam" id="TIGR01632">
    <property type="entry name" value="L11_bact"/>
    <property type="match status" value="1"/>
</dbReference>
<dbReference type="NCBIfam" id="NF011111">
    <property type="entry name" value="PRK14539.1"/>
    <property type="match status" value="1"/>
</dbReference>
<dbReference type="PANTHER" id="PTHR11661">
    <property type="entry name" value="60S RIBOSOMAL PROTEIN L12"/>
    <property type="match status" value="1"/>
</dbReference>
<dbReference type="PANTHER" id="PTHR11661:SF1">
    <property type="entry name" value="LARGE RIBOSOMAL SUBUNIT PROTEIN UL11M"/>
    <property type="match status" value="1"/>
</dbReference>
<dbReference type="Pfam" id="PF00298">
    <property type="entry name" value="Ribosomal_L11"/>
    <property type="match status" value="1"/>
</dbReference>
<dbReference type="Pfam" id="PF03946">
    <property type="entry name" value="Ribosomal_L11_N"/>
    <property type="match status" value="1"/>
</dbReference>
<dbReference type="SMART" id="SM00649">
    <property type="entry name" value="RL11"/>
    <property type="match status" value="1"/>
</dbReference>
<dbReference type="SUPFAM" id="SSF54747">
    <property type="entry name" value="Ribosomal L11/L12e N-terminal domain"/>
    <property type="match status" value="1"/>
</dbReference>
<dbReference type="SUPFAM" id="SSF46906">
    <property type="entry name" value="Ribosomal protein L11, C-terminal domain"/>
    <property type="match status" value="1"/>
</dbReference>
<organism>
    <name type="scientific">Mycoplasmopsis synoviae (strain 53)</name>
    <name type="common">Mycoplasma synoviae</name>
    <dbReference type="NCBI Taxonomy" id="262723"/>
    <lineage>
        <taxon>Bacteria</taxon>
        <taxon>Bacillati</taxon>
        <taxon>Mycoplasmatota</taxon>
        <taxon>Mycoplasmoidales</taxon>
        <taxon>Metamycoplasmataceae</taxon>
        <taxon>Mycoplasmopsis</taxon>
    </lineage>
</organism>
<accession>Q4A5E0</accession>
<evidence type="ECO:0000255" key="1">
    <source>
        <dbReference type="HAMAP-Rule" id="MF_00736"/>
    </source>
</evidence>
<evidence type="ECO:0000305" key="2"/>
<protein>
    <recommendedName>
        <fullName evidence="1">Large ribosomal subunit protein uL11</fullName>
    </recommendedName>
    <alternativeName>
        <fullName evidence="2">50S ribosomal protein L11</fullName>
    </alternativeName>
</protein>
<feature type="chain" id="PRO_0000258172" description="Large ribosomal subunit protein uL11">
    <location>
        <begin position="1"/>
        <end position="193"/>
    </location>
</feature>